<evidence type="ECO:0000255" key="1">
    <source>
        <dbReference type="HAMAP-Rule" id="MF_00386"/>
    </source>
</evidence>
<dbReference type="EMBL" id="CP000769">
    <property type="protein sequence ID" value="ABS28685.1"/>
    <property type="molecule type" value="Genomic_DNA"/>
</dbReference>
<dbReference type="RefSeq" id="WP_012099335.1">
    <property type="nucleotide sequence ID" value="NC_009675.1"/>
</dbReference>
<dbReference type="STRING" id="404589.Anae109_4507"/>
<dbReference type="KEGG" id="afw:Anae109_4507"/>
<dbReference type="eggNOG" id="COG0759">
    <property type="taxonomic scope" value="Bacteria"/>
</dbReference>
<dbReference type="HOGENOM" id="CLU_144811_6_0_7"/>
<dbReference type="OrthoDB" id="9801753at2"/>
<dbReference type="Proteomes" id="UP000006382">
    <property type="component" value="Chromosome"/>
</dbReference>
<dbReference type="GO" id="GO:0005886">
    <property type="term" value="C:plasma membrane"/>
    <property type="evidence" value="ECO:0007669"/>
    <property type="project" value="UniProtKB-SubCell"/>
</dbReference>
<dbReference type="HAMAP" id="MF_00386">
    <property type="entry name" value="UPF0161_YidD"/>
    <property type="match status" value="1"/>
</dbReference>
<dbReference type="InterPro" id="IPR002696">
    <property type="entry name" value="Membr_insert_effic_factor_YidD"/>
</dbReference>
<dbReference type="NCBIfam" id="TIGR00278">
    <property type="entry name" value="membrane protein insertion efficiency factor YidD"/>
    <property type="match status" value="1"/>
</dbReference>
<dbReference type="PANTHER" id="PTHR33383">
    <property type="entry name" value="MEMBRANE PROTEIN INSERTION EFFICIENCY FACTOR-RELATED"/>
    <property type="match status" value="1"/>
</dbReference>
<dbReference type="PANTHER" id="PTHR33383:SF1">
    <property type="entry name" value="MEMBRANE PROTEIN INSERTION EFFICIENCY FACTOR-RELATED"/>
    <property type="match status" value="1"/>
</dbReference>
<dbReference type="Pfam" id="PF01809">
    <property type="entry name" value="YidD"/>
    <property type="match status" value="1"/>
</dbReference>
<dbReference type="SMART" id="SM01234">
    <property type="entry name" value="Haemolytic"/>
    <property type="match status" value="1"/>
</dbReference>
<name>YIDD_ANADF</name>
<gene>
    <name type="ordered locus">Anae109_4507</name>
</gene>
<sequence>MIRRALVFLVRVYQRLVSPLLPPACRFYPSCSAYAATALERHGALKGSALAARRLLRCHPFHPGGIDPVPESER</sequence>
<comment type="function">
    <text evidence="1">Could be involved in insertion of integral membrane proteins into the membrane.</text>
</comment>
<comment type="subcellular location">
    <subcellularLocation>
        <location evidence="1">Cell inner membrane</location>
        <topology evidence="1">Peripheral membrane protein</topology>
        <orientation evidence="1">Cytoplasmic side</orientation>
    </subcellularLocation>
</comment>
<comment type="similarity">
    <text evidence="1">Belongs to the UPF0161 family.</text>
</comment>
<proteinExistence type="inferred from homology"/>
<keyword id="KW-0997">Cell inner membrane</keyword>
<keyword id="KW-1003">Cell membrane</keyword>
<keyword id="KW-0472">Membrane</keyword>
<keyword id="KW-1185">Reference proteome</keyword>
<organism>
    <name type="scientific">Anaeromyxobacter sp. (strain Fw109-5)</name>
    <dbReference type="NCBI Taxonomy" id="404589"/>
    <lineage>
        <taxon>Bacteria</taxon>
        <taxon>Pseudomonadati</taxon>
        <taxon>Myxococcota</taxon>
        <taxon>Myxococcia</taxon>
        <taxon>Myxococcales</taxon>
        <taxon>Cystobacterineae</taxon>
        <taxon>Anaeromyxobacteraceae</taxon>
        <taxon>Anaeromyxobacter</taxon>
    </lineage>
</organism>
<feature type="chain" id="PRO_1000013062" description="Putative membrane protein insertion efficiency factor">
    <location>
        <begin position="1"/>
        <end position="74"/>
    </location>
</feature>
<protein>
    <recommendedName>
        <fullName evidence="1">Putative membrane protein insertion efficiency factor</fullName>
    </recommendedName>
</protein>
<reference key="1">
    <citation type="journal article" date="2015" name="Genome Announc.">
        <title>Complete genome sequence of Anaeromyxobacter sp. Fw109-5, an anaerobic, metal-reducing bacterium isolated from a contaminated subsurface environment.</title>
        <authorList>
            <person name="Hwang C."/>
            <person name="Copeland A."/>
            <person name="Lucas S."/>
            <person name="Lapidus A."/>
            <person name="Barry K."/>
            <person name="Glavina Del Rio T."/>
            <person name="Dalin E."/>
            <person name="Tice H."/>
            <person name="Pitluck S."/>
            <person name="Sims D."/>
            <person name="Brettin T."/>
            <person name="Bruce D.C."/>
            <person name="Detter J.C."/>
            <person name="Han C.S."/>
            <person name="Schmutz J."/>
            <person name="Larimer F.W."/>
            <person name="Land M.L."/>
            <person name="Hauser L.J."/>
            <person name="Kyrpides N."/>
            <person name="Lykidis A."/>
            <person name="Richardson P."/>
            <person name="Belieav A."/>
            <person name="Sanford R.A."/>
            <person name="Loeffler F.E."/>
            <person name="Fields M.W."/>
        </authorList>
    </citation>
    <scope>NUCLEOTIDE SEQUENCE [LARGE SCALE GENOMIC DNA]</scope>
    <source>
        <strain>Fw109-5</strain>
    </source>
</reference>
<accession>A7HIY9</accession>